<feature type="chain" id="PRO_0000071198" description="Uncharacterized protein L68">
    <location>
        <begin position="1"/>
        <end position="241"/>
    </location>
</feature>
<feature type="transmembrane region" description="Helical" evidence="1">
    <location>
        <begin position="12"/>
        <end position="32"/>
    </location>
</feature>
<feature type="transmembrane region" description="Helical" evidence="1">
    <location>
        <begin position="39"/>
        <end position="59"/>
    </location>
</feature>
<feature type="transmembrane region" description="Helical" evidence="1">
    <location>
        <begin position="89"/>
        <end position="109"/>
    </location>
</feature>
<feature type="transmembrane region" description="Helical" evidence="1">
    <location>
        <begin position="117"/>
        <end position="137"/>
    </location>
</feature>
<feature type="transmembrane region" description="Helical" evidence="1">
    <location>
        <begin position="152"/>
        <end position="172"/>
    </location>
</feature>
<feature type="transmembrane region" description="Helical" evidence="1">
    <location>
        <begin position="180"/>
        <end position="200"/>
    </location>
</feature>
<feature type="transmembrane region" description="Helical" evidence="1">
    <location>
        <begin position="215"/>
        <end position="235"/>
    </location>
</feature>
<sequence>MDYFSIIKITMITEIYFQYVIYILCFGVLLLLKSESDRLLWLHLVSILVGLIANYEMKFNVLFAMFHSAVHNLWPFLKNTGYDNTEKSVYDVICHTIMVVICYHQICYTENAVTNNYYTFHLFSVMIIIGALFNCVVSGKAIGSNDRFLHSLFEYTTIFQALSTGYWVATMLWYHHLDNIHFYSHWIIWIGLMTINWFVYKFYPNLVGISMRYKYVEAVFIVCTWYSGIISSPLIKYINVY</sequence>
<comment type="subcellular location">
    <subcellularLocation>
        <location evidence="2">Membrane</location>
        <topology evidence="2">Multi-pass membrane protein</topology>
    </subcellularLocation>
</comment>
<comment type="similarity">
    <text evidence="2">Belongs to the mimivirus L68/R809 family.</text>
</comment>
<evidence type="ECO:0000255" key="1"/>
<evidence type="ECO:0000305" key="2"/>
<protein>
    <recommendedName>
        <fullName>Uncharacterized protein L68</fullName>
    </recommendedName>
</protein>
<organism>
    <name type="scientific">Acanthamoeba polyphaga mimivirus</name>
    <name type="common">APMV</name>
    <dbReference type="NCBI Taxonomy" id="212035"/>
    <lineage>
        <taxon>Viruses</taxon>
        <taxon>Varidnaviria</taxon>
        <taxon>Bamfordvirae</taxon>
        <taxon>Nucleocytoviricota</taxon>
        <taxon>Megaviricetes</taxon>
        <taxon>Imitervirales</taxon>
        <taxon>Mimiviridae</taxon>
        <taxon>Megamimivirinae</taxon>
        <taxon>Mimivirus</taxon>
        <taxon>Mimivirus bradfordmassiliense</taxon>
    </lineage>
</organism>
<keyword id="KW-0472">Membrane</keyword>
<keyword id="KW-1185">Reference proteome</keyword>
<keyword id="KW-0812">Transmembrane</keyword>
<keyword id="KW-1133">Transmembrane helix</keyword>
<reference key="1">
    <citation type="journal article" date="2004" name="Science">
        <title>The 1.2-megabase genome sequence of Mimivirus.</title>
        <authorList>
            <person name="Raoult D."/>
            <person name="Audic S."/>
            <person name="Robert C."/>
            <person name="Abergel C."/>
            <person name="Renesto P."/>
            <person name="Ogata H."/>
            <person name="La Scola B."/>
            <person name="Susan M."/>
            <person name="Claverie J.-M."/>
        </authorList>
    </citation>
    <scope>NUCLEOTIDE SEQUENCE [LARGE SCALE GENOMIC DNA]</scope>
    <source>
        <strain>Rowbotham-Bradford</strain>
    </source>
</reference>
<organismHost>
    <name type="scientific">Acanthamoeba polyphaga</name>
    <name type="common">Amoeba</name>
    <dbReference type="NCBI Taxonomy" id="5757"/>
</organismHost>
<proteinExistence type="inferred from homology"/>
<accession>Q5UPE7</accession>
<name>YL068_MIMIV</name>
<gene>
    <name type="ordered locus">MIMI_L68</name>
</gene>
<dbReference type="EMBL" id="AY653733">
    <property type="protein sequence ID" value="AAV50343.1"/>
    <property type="molecule type" value="Genomic_DNA"/>
</dbReference>
<dbReference type="KEGG" id="vg:9924662"/>
<dbReference type="OrthoDB" id="30865at10239"/>
<dbReference type="Proteomes" id="UP000001134">
    <property type="component" value="Genome"/>
</dbReference>
<dbReference type="GO" id="GO:0016020">
    <property type="term" value="C:membrane"/>
    <property type="evidence" value="ECO:0007669"/>
    <property type="project" value="UniProtKB-SubCell"/>
</dbReference>